<organism>
    <name type="scientific">Streptococcus uberis (strain ATCC BAA-854 / 0140J)</name>
    <dbReference type="NCBI Taxonomy" id="218495"/>
    <lineage>
        <taxon>Bacteria</taxon>
        <taxon>Bacillati</taxon>
        <taxon>Bacillota</taxon>
        <taxon>Bacilli</taxon>
        <taxon>Lactobacillales</taxon>
        <taxon>Streptococcaceae</taxon>
        <taxon>Streptococcus</taxon>
    </lineage>
</organism>
<name>RS6_STRU0</name>
<evidence type="ECO:0000255" key="1">
    <source>
        <dbReference type="HAMAP-Rule" id="MF_00360"/>
    </source>
</evidence>
<evidence type="ECO:0000305" key="2"/>
<proteinExistence type="inferred from homology"/>
<feature type="chain" id="PRO_1000133548" description="Small ribosomal subunit protein bS6">
    <location>
        <begin position="1"/>
        <end position="96"/>
    </location>
</feature>
<keyword id="KW-1185">Reference proteome</keyword>
<keyword id="KW-0687">Ribonucleoprotein</keyword>
<keyword id="KW-0689">Ribosomal protein</keyword>
<keyword id="KW-0694">RNA-binding</keyword>
<keyword id="KW-0699">rRNA-binding</keyword>
<gene>
    <name evidence="1" type="primary">rpsF</name>
    <name type="ordered locus">SUB1557</name>
</gene>
<comment type="function">
    <text evidence="1">Binds together with bS18 to 16S ribosomal RNA.</text>
</comment>
<comment type="similarity">
    <text evidence="1">Belongs to the bacterial ribosomal protein bS6 family.</text>
</comment>
<accession>B9DVK4</accession>
<protein>
    <recommendedName>
        <fullName evidence="1">Small ribosomal subunit protein bS6</fullName>
    </recommendedName>
    <alternativeName>
        <fullName evidence="2">30S ribosomal protein S6</fullName>
    </alternativeName>
</protein>
<dbReference type="EMBL" id="AM946015">
    <property type="protein sequence ID" value="CAR43337.1"/>
    <property type="molecule type" value="Genomic_DNA"/>
</dbReference>
<dbReference type="RefSeq" id="WP_015911863.1">
    <property type="nucleotide sequence ID" value="NC_012004.1"/>
</dbReference>
<dbReference type="SMR" id="B9DVK4"/>
<dbReference type="STRING" id="218495.SUB1557"/>
<dbReference type="GeneID" id="93826881"/>
<dbReference type="KEGG" id="sub:SUB1557"/>
<dbReference type="eggNOG" id="COG0360">
    <property type="taxonomic scope" value="Bacteria"/>
</dbReference>
<dbReference type="HOGENOM" id="CLU_113441_5_3_9"/>
<dbReference type="OrthoDB" id="9812702at2"/>
<dbReference type="Proteomes" id="UP000000449">
    <property type="component" value="Chromosome"/>
</dbReference>
<dbReference type="GO" id="GO:0005737">
    <property type="term" value="C:cytoplasm"/>
    <property type="evidence" value="ECO:0007669"/>
    <property type="project" value="UniProtKB-ARBA"/>
</dbReference>
<dbReference type="GO" id="GO:1990904">
    <property type="term" value="C:ribonucleoprotein complex"/>
    <property type="evidence" value="ECO:0007669"/>
    <property type="project" value="UniProtKB-KW"/>
</dbReference>
<dbReference type="GO" id="GO:0005840">
    <property type="term" value="C:ribosome"/>
    <property type="evidence" value="ECO:0007669"/>
    <property type="project" value="UniProtKB-KW"/>
</dbReference>
<dbReference type="GO" id="GO:0070181">
    <property type="term" value="F:small ribosomal subunit rRNA binding"/>
    <property type="evidence" value="ECO:0007669"/>
    <property type="project" value="TreeGrafter"/>
</dbReference>
<dbReference type="GO" id="GO:0003735">
    <property type="term" value="F:structural constituent of ribosome"/>
    <property type="evidence" value="ECO:0007669"/>
    <property type="project" value="InterPro"/>
</dbReference>
<dbReference type="GO" id="GO:0006412">
    <property type="term" value="P:translation"/>
    <property type="evidence" value="ECO:0007669"/>
    <property type="project" value="UniProtKB-UniRule"/>
</dbReference>
<dbReference type="CDD" id="cd00473">
    <property type="entry name" value="bS6"/>
    <property type="match status" value="1"/>
</dbReference>
<dbReference type="FunFam" id="3.30.70.60:FF:000002">
    <property type="entry name" value="30S ribosomal protein S6"/>
    <property type="match status" value="1"/>
</dbReference>
<dbReference type="Gene3D" id="3.30.70.60">
    <property type="match status" value="1"/>
</dbReference>
<dbReference type="HAMAP" id="MF_00360">
    <property type="entry name" value="Ribosomal_bS6"/>
    <property type="match status" value="1"/>
</dbReference>
<dbReference type="InterPro" id="IPR000529">
    <property type="entry name" value="Ribosomal_bS6"/>
</dbReference>
<dbReference type="InterPro" id="IPR035980">
    <property type="entry name" value="Ribosomal_bS6_sf"/>
</dbReference>
<dbReference type="InterPro" id="IPR020814">
    <property type="entry name" value="Ribosomal_S6_plastid/chlpt"/>
</dbReference>
<dbReference type="InterPro" id="IPR014717">
    <property type="entry name" value="Transl_elong_EF1B/ribsomal_bS6"/>
</dbReference>
<dbReference type="NCBIfam" id="TIGR00166">
    <property type="entry name" value="S6"/>
    <property type="match status" value="1"/>
</dbReference>
<dbReference type="PANTHER" id="PTHR21011">
    <property type="entry name" value="MITOCHONDRIAL 28S RIBOSOMAL PROTEIN S6"/>
    <property type="match status" value="1"/>
</dbReference>
<dbReference type="PANTHER" id="PTHR21011:SF1">
    <property type="entry name" value="SMALL RIBOSOMAL SUBUNIT PROTEIN BS6M"/>
    <property type="match status" value="1"/>
</dbReference>
<dbReference type="Pfam" id="PF01250">
    <property type="entry name" value="Ribosomal_S6"/>
    <property type="match status" value="1"/>
</dbReference>
<dbReference type="SUPFAM" id="SSF54995">
    <property type="entry name" value="Ribosomal protein S6"/>
    <property type="match status" value="1"/>
</dbReference>
<sequence>MAKYEILYIIRPNIEEEAKNALVSRFDSILTDNGATIVESKDWEKRRLAYEINDFREGLYHIVNVESEDAVALNEFDRLAKINGDILRHMIVKLDA</sequence>
<reference key="1">
    <citation type="journal article" date="2009" name="BMC Genomics">
        <title>Evidence for niche adaptation in the genome of the bovine pathogen Streptococcus uberis.</title>
        <authorList>
            <person name="Ward P.N."/>
            <person name="Holden M.T.G."/>
            <person name="Leigh J.A."/>
            <person name="Lennard N."/>
            <person name="Bignell A."/>
            <person name="Barron A."/>
            <person name="Clark L."/>
            <person name="Quail M.A."/>
            <person name="Woodward J."/>
            <person name="Barrell B.G."/>
            <person name="Egan S.A."/>
            <person name="Field T.R."/>
            <person name="Maskell D."/>
            <person name="Kehoe M."/>
            <person name="Dowson C.G."/>
            <person name="Chanter N."/>
            <person name="Whatmore A.M."/>
            <person name="Bentley S.D."/>
            <person name="Parkhill J."/>
        </authorList>
    </citation>
    <scope>NUCLEOTIDE SEQUENCE [LARGE SCALE GENOMIC DNA]</scope>
    <source>
        <strain>ATCC BAA-854 / 0140J</strain>
    </source>
</reference>